<name>XDH_PAENI</name>
<proteinExistence type="evidence at protein level"/>
<sequence>MTKTAIVRVAMNGITGRMGYRQHLLRSILPIRDAGGFTLEDGTKVQIEPILVGRNEAKIRELAEKHKVAEWSTDLDSVVNDPTVDIIFDASMTSLRAATLKKAMLAGKHIFTEKPTAETLEEAIELARIGKQAGVTAGVVHDKLYLPGLVKLRRLVDEGFFGRILSIRGEFGYWVFEGDVQAAQRPSWNYRKEDGGGMTTDMFCHWNYVLEGIIGKVKSVNAKTATHIPTRWDEAGKEYKATADDASYGIFELETPGGDDVIGQINSSWAVRVYRDELVEFQVDGTHGSAVAGLNKCVAQQRAHTPKPVWNPDLPVTESFRDQWQEVPANAELDNGFKLQWEEFLRDVVAGREHRFGLLSAARGVQLAELGLQSNDERRTIDIPEITL</sequence>
<feature type="chain" id="PRO_0000429428" description="D-xylose dehydrogenase">
    <location>
        <begin position="1"/>
        <end position="388"/>
    </location>
</feature>
<geneLocation type="plasmid">
    <name>pAO1</name>
</geneLocation>
<comment type="function">
    <text evidence="1">Catalyzes the NADP(+)-dependent oxidation of D-xylose. Is able to use both NADP(+) and NAD(+); however, the enzyme shows a very strong preference for NADP(+). Is likely involved in the first step of the oxidative D-xylose degradation pathway.</text>
</comment>
<comment type="catalytic activity">
    <reaction evidence="1">
        <text>D-xylose + NADP(+) = D-xylono-1,5-lactone + NADPH + H(+)</text>
        <dbReference type="Rhea" id="RHEA:22000"/>
        <dbReference type="ChEBI" id="CHEBI:15378"/>
        <dbReference type="ChEBI" id="CHEBI:15867"/>
        <dbReference type="ChEBI" id="CHEBI:53455"/>
        <dbReference type="ChEBI" id="CHEBI:57783"/>
        <dbReference type="ChEBI" id="CHEBI:58349"/>
        <dbReference type="EC" id="1.1.1.179"/>
    </reaction>
</comment>
<comment type="catalytic activity">
    <reaction evidence="1">
        <text>D-xylose + NAD(+) = D-xylono-1,5-lactone + NADH + H(+)</text>
        <dbReference type="Rhea" id="RHEA:13861"/>
        <dbReference type="ChEBI" id="CHEBI:15378"/>
        <dbReference type="ChEBI" id="CHEBI:15867"/>
        <dbReference type="ChEBI" id="CHEBI:53455"/>
        <dbReference type="ChEBI" id="CHEBI:57540"/>
        <dbReference type="ChEBI" id="CHEBI:57945"/>
    </reaction>
</comment>
<comment type="cofactor">
    <cofactor evidence="1">
        <name>Zn(2+)</name>
        <dbReference type="ChEBI" id="CHEBI:29105"/>
    </cofactor>
    <text evidence="1">Binds 2 Zn(2+) ions per subunit.</text>
</comment>
<comment type="biophysicochemical properties">
    <kinetics>
        <KM evidence="1">15.2 mM for D-xylose</KM>
        <KM evidence="1">0.32 mM for NADP(+)</KM>
        <KM evidence="1">5.03 mM for NAD(+)</KM>
        <text>kcat is 14.9 sec(-1).</text>
    </kinetics>
</comment>
<comment type="pathway">
    <text evidence="1">Carbohydrate metabolism; D-xylose degradation.</text>
</comment>
<comment type="subunit">
    <text evidence="1">Homotetramer.</text>
</comment>
<comment type="induction">
    <text evidence="1">Is induced by D-xylose. No significant levels of expression can detected when the cells are grown on various other sugars such as L-xylose, L-arabinose, D-galactose, D-tagatose and D-glucose.</text>
</comment>
<comment type="similarity">
    <text evidence="2">Belongs to the Gfo/Idh/MocA family.</text>
</comment>
<reference key="1">
    <citation type="journal article" date="2003" name="J. Bacteriol.">
        <title>Sequence of the 165-kilobase catabolic plasmid pAO1 from Arthrobacter nicotinovorans and identification of a pAO1-dependent nicotine uptake system.</title>
        <authorList>
            <person name="Igloi G.L."/>
            <person name="Brandsch R."/>
        </authorList>
    </citation>
    <scope>NUCLEOTIDE SEQUENCE [GENOMIC DNA]</scope>
    <source>
        <strain>ATCC 49919 / DSM 420 / JCM 3874 / KCTC 9902 / LMG 16253 / NBRC 15511</strain>
        <plasmid>pAO1</plasmid>
    </source>
</reference>
<reference key="2">
    <citation type="journal article" date="2013" name="Res. Microbiol.">
        <title>Evidence of a plasmid-encoded oxidative xylose-catabolic pathway in Arthrobacter nicotinovorans pAO1.</title>
        <authorList>
            <person name="Mihasan M."/>
            <person name="Stefan M."/>
            <person name="Hritcu L."/>
            <person name="Artenie V."/>
            <person name="Brandsch R."/>
        </authorList>
    </citation>
    <scope>FUNCTION</scope>
    <scope>CATALYTIC ACTIVITY</scope>
    <scope>SUBSTRATE SPECIFICITY</scope>
    <scope>COFACTOR</scope>
    <scope>KINETIC PARAMETERS</scope>
    <scope>SUBUNIT</scope>
    <scope>PATHWAY</scope>
    <scope>INDUCTION</scope>
    <source>
        <strain>ATCC 49919 / DSM 420 / JCM 3874 / KCTC 9902 / LMG 16253 / NBRC 15511</strain>
        <plasmid>pAO1</plasmid>
    </source>
</reference>
<organism>
    <name type="scientific">Paenarthrobacter nicotinovorans</name>
    <name type="common">Arthrobacter nicotinovorans</name>
    <dbReference type="NCBI Taxonomy" id="29320"/>
    <lineage>
        <taxon>Bacteria</taxon>
        <taxon>Bacillati</taxon>
        <taxon>Actinomycetota</taxon>
        <taxon>Actinomycetes</taxon>
        <taxon>Micrococcales</taxon>
        <taxon>Micrococcaceae</taxon>
        <taxon>Paenarthrobacter</taxon>
    </lineage>
</organism>
<keyword id="KW-0119">Carbohydrate metabolism</keyword>
<keyword id="KW-0520">NAD</keyword>
<keyword id="KW-0521">NADP</keyword>
<keyword id="KW-0560">Oxidoreductase</keyword>
<keyword id="KW-0614">Plasmid</keyword>
<evidence type="ECO:0000269" key="1">
    <source>
    </source>
</evidence>
<evidence type="ECO:0000305" key="2"/>
<gene>
    <name type="primary">xdh</name>
    <name type="ORF">ORF40</name>
</gene>
<accession>Q8GAK6</accession>
<dbReference type="EC" id="1.1.1.179" evidence="1"/>
<dbReference type="EMBL" id="AJ507836">
    <property type="protein sequence ID" value="CAD47898.1"/>
    <property type="molecule type" value="Genomic_DNA"/>
</dbReference>
<dbReference type="RefSeq" id="WP_016359409.1">
    <property type="nucleotide sequence ID" value="NC_021229.1"/>
</dbReference>
<dbReference type="RefSeq" id="YP_007988724.1">
    <property type="nucleotide sequence ID" value="NC_021229.1"/>
</dbReference>
<dbReference type="SMR" id="Q8GAK6"/>
<dbReference type="STRING" id="29320.CVCC1112_2095"/>
<dbReference type="GeneID" id="84020247"/>
<dbReference type="eggNOG" id="COG0673">
    <property type="taxonomic scope" value="Bacteria"/>
</dbReference>
<dbReference type="SABIO-RK" id="Q8GAK6"/>
<dbReference type="UniPathway" id="UPA00810"/>
<dbReference type="GO" id="GO:0047838">
    <property type="term" value="F:D-xylose 1-dehydrogenase (NAD+) activity"/>
    <property type="evidence" value="ECO:0007669"/>
    <property type="project" value="RHEA"/>
</dbReference>
<dbReference type="GO" id="GO:0047837">
    <property type="term" value="F:D-xylose 1-dehydrogenase (NADP+) activity"/>
    <property type="evidence" value="ECO:0000314"/>
    <property type="project" value="UniProtKB"/>
</dbReference>
<dbReference type="GO" id="GO:0051287">
    <property type="term" value="F:NAD binding"/>
    <property type="evidence" value="ECO:0000314"/>
    <property type="project" value="UniProtKB"/>
</dbReference>
<dbReference type="GO" id="GO:0050661">
    <property type="term" value="F:NADP binding"/>
    <property type="evidence" value="ECO:0000314"/>
    <property type="project" value="UniProtKB"/>
</dbReference>
<dbReference type="GO" id="GO:0008270">
    <property type="term" value="F:zinc ion binding"/>
    <property type="evidence" value="ECO:0000314"/>
    <property type="project" value="UniProtKB"/>
</dbReference>
<dbReference type="GO" id="GO:0042843">
    <property type="term" value="P:D-xylose catabolic process"/>
    <property type="evidence" value="ECO:0000314"/>
    <property type="project" value="UniProtKB"/>
</dbReference>
<dbReference type="GO" id="GO:0051289">
    <property type="term" value="P:protein homotetramerization"/>
    <property type="evidence" value="ECO:0000314"/>
    <property type="project" value="UniProtKB"/>
</dbReference>
<dbReference type="FunFam" id="3.30.360.10:FF:000028">
    <property type="entry name" value="GLUCOSE-FRUCTOSE OXIDOREDUCTASE"/>
    <property type="match status" value="1"/>
</dbReference>
<dbReference type="Gene3D" id="3.30.360.10">
    <property type="entry name" value="Dihydrodipicolinate Reductase, domain 2"/>
    <property type="match status" value="1"/>
</dbReference>
<dbReference type="Gene3D" id="3.40.50.720">
    <property type="entry name" value="NAD(P)-binding Rossmann-like Domain"/>
    <property type="match status" value="1"/>
</dbReference>
<dbReference type="InterPro" id="IPR000683">
    <property type="entry name" value="Gfo/Idh/MocA-like_OxRdtase_N"/>
</dbReference>
<dbReference type="InterPro" id="IPR050463">
    <property type="entry name" value="Gfo/Idh/MocA_oxidrdct_glycsds"/>
</dbReference>
<dbReference type="InterPro" id="IPR055170">
    <property type="entry name" value="GFO_IDH_MocA-like_dom"/>
</dbReference>
<dbReference type="InterPro" id="IPR036291">
    <property type="entry name" value="NAD(P)-bd_dom_sf"/>
</dbReference>
<dbReference type="PANTHER" id="PTHR43818">
    <property type="entry name" value="BCDNA.GH03377"/>
    <property type="match status" value="1"/>
</dbReference>
<dbReference type="PANTHER" id="PTHR43818:SF11">
    <property type="entry name" value="BCDNA.GH03377"/>
    <property type="match status" value="1"/>
</dbReference>
<dbReference type="Pfam" id="PF01408">
    <property type="entry name" value="GFO_IDH_MocA"/>
    <property type="match status" value="1"/>
</dbReference>
<dbReference type="Pfam" id="PF22725">
    <property type="entry name" value="GFO_IDH_MocA_C3"/>
    <property type="match status" value="1"/>
</dbReference>
<dbReference type="SUPFAM" id="SSF55347">
    <property type="entry name" value="Glyceraldehyde-3-phosphate dehydrogenase-like, C-terminal domain"/>
    <property type="match status" value="1"/>
</dbReference>
<dbReference type="SUPFAM" id="SSF51735">
    <property type="entry name" value="NAD(P)-binding Rossmann-fold domains"/>
    <property type="match status" value="1"/>
</dbReference>
<protein>
    <recommendedName>
        <fullName>D-xylose dehydrogenase</fullName>
        <ecNumber evidence="1">1.1.1.179</ecNumber>
    </recommendedName>
    <alternativeName>
        <fullName>NADP-dependent D-xylose dehydrogenase</fullName>
    </alternativeName>
</protein>